<feature type="chain" id="PRO_0000325993" description="Photosystem I assembly protein Ycf4">
    <location>
        <begin position="1"/>
        <end position="184"/>
    </location>
</feature>
<feature type="transmembrane region" description="Helical" evidence="1">
    <location>
        <begin position="22"/>
        <end position="42"/>
    </location>
</feature>
<feature type="transmembrane region" description="Helical" evidence="1">
    <location>
        <begin position="57"/>
        <end position="77"/>
    </location>
</feature>
<comment type="function">
    <text evidence="1">Seems to be required for the assembly of the photosystem I complex.</text>
</comment>
<comment type="subcellular location">
    <subcellularLocation>
        <location evidence="1">Plastid</location>
        <location evidence="1">Chloroplast thylakoid membrane</location>
        <topology evidence="1">Multi-pass membrane protein</topology>
    </subcellularLocation>
</comment>
<comment type="similarity">
    <text evidence="1">Belongs to the Ycf4 family.</text>
</comment>
<organism>
    <name type="scientific">Aethionema grandiflorum</name>
    <name type="common">Persian stone-cress</name>
    <dbReference type="NCBI Taxonomy" id="72657"/>
    <lineage>
        <taxon>Eukaryota</taxon>
        <taxon>Viridiplantae</taxon>
        <taxon>Streptophyta</taxon>
        <taxon>Embryophyta</taxon>
        <taxon>Tracheophyta</taxon>
        <taxon>Spermatophyta</taxon>
        <taxon>Magnoliopsida</taxon>
        <taxon>eudicotyledons</taxon>
        <taxon>Gunneridae</taxon>
        <taxon>Pentapetalae</taxon>
        <taxon>rosids</taxon>
        <taxon>malvids</taxon>
        <taxon>Brassicales</taxon>
        <taxon>Brassicaceae</taxon>
        <taxon>Aethionemeae</taxon>
        <taxon>Aethionema</taxon>
    </lineage>
</organism>
<geneLocation type="chloroplast"/>
<dbReference type="EMBL" id="AP009367">
    <property type="protein sequence ID" value="BAF49865.1"/>
    <property type="molecule type" value="Genomic_DNA"/>
</dbReference>
<dbReference type="RefSeq" id="YP_001123041.1">
    <property type="nucleotide sequence ID" value="NC_009266.1"/>
</dbReference>
<dbReference type="GeneID" id="4962305"/>
<dbReference type="GO" id="GO:0009535">
    <property type="term" value="C:chloroplast thylakoid membrane"/>
    <property type="evidence" value="ECO:0007669"/>
    <property type="project" value="UniProtKB-SubCell"/>
</dbReference>
<dbReference type="GO" id="GO:0009522">
    <property type="term" value="C:photosystem I"/>
    <property type="evidence" value="ECO:0007669"/>
    <property type="project" value="InterPro"/>
</dbReference>
<dbReference type="GO" id="GO:0015979">
    <property type="term" value="P:photosynthesis"/>
    <property type="evidence" value="ECO:0007669"/>
    <property type="project" value="UniProtKB-UniRule"/>
</dbReference>
<dbReference type="HAMAP" id="MF_00437">
    <property type="entry name" value="Ycf4"/>
    <property type="match status" value="1"/>
</dbReference>
<dbReference type="InterPro" id="IPR003359">
    <property type="entry name" value="PSI_Ycf4_assembly"/>
</dbReference>
<dbReference type="PANTHER" id="PTHR33288">
    <property type="match status" value="1"/>
</dbReference>
<dbReference type="PANTHER" id="PTHR33288:SF4">
    <property type="entry name" value="PHOTOSYSTEM I ASSEMBLY PROTEIN YCF4"/>
    <property type="match status" value="1"/>
</dbReference>
<dbReference type="Pfam" id="PF02392">
    <property type="entry name" value="Ycf4"/>
    <property type="match status" value="1"/>
</dbReference>
<protein>
    <recommendedName>
        <fullName evidence="1">Photosystem I assembly protein Ycf4</fullName>
    </recommendedName>
</protein>
<proteinExistence type="inferred from homology"/>
<accession>A4QJL0</accession>
<name>YCF4_AETGR</name>
<sequence length="184" mass="21474">MSWRSESIWIEFRTGSRKTSNFFWAFILFLGSLGFLLVGTSSYLGRNVISLFPSQQIIFFPQGIVMSFYGIAGLFISCYLWCTILWNVGSGYDLFDRKEGIVRIFRWGFPGKSRRIFLRFLMKDIQSIRIEVKEGISARRVLYMEIRGQGAIPLIRTDENFTTREIEQKAAELAYFLRVPIEVF</sequence>
<evidence type="ECO:0000255" key="1">
    <source>
        <dbReference type="HAMAP-Rule" id="MF_00437"/>
    </source>
</evidence>
<keyword id="KW-0150">Chloroplast</keyword>
<keyword id="KW-0472">Membrane</keyword>
<keyword id="KW-0602">Photosynthesis</keyword>
<keyword id="KW-0934">Plastid</keyword>
<keyword id="KW-0793">Thylakoid</keyword>
<keyword id="KW-0812">Transmembrane</keyword>
<keyword id="KW-1133">Transmembrane helix</keyword>
<gene>
    <name evidence="1" type="primary">ycf4</name>
</gene>
<reference key="1">
    <citation type="submission" date="2007-03" db="EMBL/GenBank/DDBJ databases">
        <title>Sequencing analysis of Aethionema grandiflorum chloroplast DNA.</title>
        <authorList>
            <person name="Hosouchi T."/>
            <person name="Tsuruoka H."/>
            <person name="Kotani H."/>
        </authorList>
    </citation>
    <scope>NUCLEOTIDE SEQUENCE [LARGE SCALE GENOMIC DNA]</scope>
</reference>